<evidence type="ECO:0000255" key="1">
    <source>
        <dbReference type="HAMAP-Rule" id="MF_00787"/>
    </source>
</evidence>
<accession>B7V6W0</accession>
<protein>
    <recommendedName>
        <fullName evidence="1">Cobalt-precorrin-5B C(1)-methyltransferase</fullName>
        <ecNumber evidence="1">2.1.1.195</ecNumber>
    </recommendedName>
    <alternativeName>
        <fullName evidence="1">Cobalt-precorrin-6A synthase</fullName>
    </alternativeName>
</protein>
<name>CBID_PSEA8</name>
<gene>
    <name evidence="1" type="primary">cbiD</name>
    <name type="ordered locus">PLES_21561</name>
</gene>
<reference key="1">
    <citation type="journal article" date="2009" name="Genome Res.">
        <title>Newly introduced genomic prophage islands are critical determinants of in vivo competitiveness in the Liverpool epidemic strain of Pseudomonas aeruginosa.</title>
        <authorList>
            <person name="Winstanley C."/>
            <person name="Langille M.G.I."/>
            <person name="Fothergill J.L."/>
            <person name="Kukavica-Ibrulj I."/>
            <person name="Paradis-Bleau C."/>
            <person name="Sanschagrin F."/>
            <person name="Thomson N.R."/>
            <person name="Winsor G.L."/>
            <person name="Quail M.A."/>
            <person name="Lennard N."/>
            <person name="Bignell A."/>
            <person name="Clarke L."/>
            <person name="Seeger K."/>
            <person name="Saunders D."/>
            <person name="Harris D."/>
            <person name="Parkhill J."/>
            <person name="Hancock R.E.W."/>
            <person name="Brinkman F.S.L."/>
            <person name="Levesque R.C."/>
        </authorList>
    </citation>
    <scope>NUCLEOTIDE SEQUENCE [LARGE SCALE GENOMIC DNA]</scope>
    <source>
        <strain>LESB58</strain>
    </source>
</reference>
<comment type="function">
    <text evidence="1">Catalyzes the methylation of C-1 in cobalt-precorrin-5B to form cobalt-precorrin-6A.</text>
</comment>
<comment type="catalytic activity">
    <reaction evidence="1">
        <text>Co-precorrin-5B + S-adenosyl-L-methionine = Co-precorrin-6A + S-adenosyl-L-homocysteine</text>
        <dbReference type="Rhea" id="RHEA:26285"/>
        <dbReference type="ChEBI" id="CHEBI:57856"/>
        <dbReference type="ChEBI" id="CHEBI:59789"/>
        <dbReference type="ChEBI" id="CHEBI:60063"/>
        <dbReference type="ChEBI" id="CHEBI:60064"/>
        <dbReference type="EC" id="2.1.1.195"/>
    </reaction>
</comment>
<comment type="pathway">
    <text evidence="1">Cofactor biosynthesis; adenosylcobalamin biosynthesis; cob(II)yrinate a,c-diamide from sirohydrochlorin (anaerobic route): step 6/10.</text>
</comment>
<comment type="similarity">
    <text evidence="1">Belongs to the CbiD family.</text>
</comment>
<keyword id="KW-0169">Cobalamin biosynthesis</keyword>
<keyword id="KW-0489">Methyltransferase</keyword>
<keyword id="KW-0949">S-adenosyl-L-methionine</keyword>
<keyword id="KW-0808">Transferase</keyword>
<dbReference type="EC" id="2.1.1.195" evidence="1"/>
<dbReference type="EMBL" id="FM209186">
    <property type="protein sequence ID" value="CAW26883.1"/>
    <property type="molecule type" value="Genomic_DNA"/>
</dbReference>
<dbReference type="RefSeq" id="WP_003114022.1">
    <property type="nucleotide sequence ID" value="NC_011770.1"/>
</dbReference>
<dbReference type="SMR" id="B7V6W0"/>
<dbReference type="KEGG" id="pag:PLES_21561"/>
<dbReference type="HOGENOM" id="CLU_041273_0_0_6"/>
<dbReference type="UniPathway" id="UPA00148">
    <property type="reaction ID" value="UER00227"/>
</dbReference>
<dbReference type="GO" id="GO:0043780">
    <property type="term" value="F:cobalt-precorrin-5B C1-methyltransferase activity"/>
    <property type="evidence" value="ECO:0007669"/>
    <property type="project" value="RHEA"/>
</dbReference>
<dbReference type="GO" id="GO:0019251">
    <property type="term" value="P:anaerobic cobalamin biosynthetic process"/>
    <property type="evidence" value="ECO:0007669"/>
    <property type="project" value="UniProtKB-UniRule"/>
</dbReference>
<dbReference type="GO" id="GO:0032259">
    <property type="term" value="P:methylation"/>
    <property type="evidence" value="ECO:0007669"/>
    <property type="project" value="UniProtKB-KW"/>
</dbReference>
<dbReference type="Gene3D" id="3.30.2110.10">
    <property type="entry name" value="CbiD-like"/>
    <property type="match status" value="1"/>
</dbReference>
<dbReference type="HAMAP" id="MF_00787">
    <property type="entry name" value="CbiD"/>
    <property type="match status" value="1"/>
</dbReference>
<dbReference type="InterPro" id="IPR002748">
    <property type="entry name" value="CbiD"/>
</dbReference>
<dbReference type="InterPro" id="IPR036074">
    <property type="entry name" value="CbiD_sf"/>
</dbReference>
<dbReference type="NCBIfam" id="TIGR00312">
    <property type="entry name" value="cbiD"/>
    <property type="match status" value="1"/>
</dbReference>
<dbReference type="NCBIfam" id="NF000849">
    <property type="entry name" value="PRK00075.1-1"/>
    <property type="match status" value="1"/>
</dbReference>
<dbReference type="PANTHER" id="PTHR35863">
    <property type="entry name" value="COBALT-PRECORRIN-5B C(1)-METHYLTRANSFERASE"/>
    <property type="match status" value="1"/>
</dbReference>
<dbReference type="PANTHER" id="PTHR35863:SF1">
    <property type="entry name" value="COBALT-PRECORRIN-5B C(1)-METHYLTRANSFERASE"/>
    <property type="match status" value="1"/>
</dbReference>
<dbReference type="Pfam" id="PF01888">
    <property type="entry name" value="CbiD"/>
    <property type="match status" value="1"/>
</dbReference>
<dbReference type="PIRSF" id="PIRSF026782">
    <property type="entry name" value="CbiD"/>
    <property type="match status" value="1"/>
</dbReference>
<dbReference type="SUPFAM" id="SSF111342">
    <property type="entry name" value="CbiD-like"/>
    <property type="match status" value="1"/>
</dbReference>
<sequence length="366" mass="38146">MREETPEQPAPLRSGYTTGSCATATSLAAARLLLGGTISDAVQIVLPKGQQVLMRLEFCRAWENGAEAGTLKDAGDDPDVTHGALVFARVRLSAEPGVRFHAGPGVGTVTRPGLTLAVGEPAINPVPRQMIERHLAQLAAERGYAGGFEVAIGVEGGAELALKTMNPRLGILGGLSILGTSGIVRPFSCSAYIASIHQGIDVARANGVRHIAACTGNASEDAMRRRYALPEIALIEMGDFAGAVLKHLRRAPVEKLSLCGGFGKISKLAGGHLDLHSRHSSIDLPQLAGWAAALGASTALQDSMRAANTSQQALAQAHAEGVALGDAVCAHALRFARGIVPTEVALEVFAIDRQGNLVGQACEERR</sequence>
<proteinExistence type="inferred from homology"/>
<organism>
    <name type="scientific">Pseudomonas aeruginosa (strain LESB58)</name>
    <dbReference type="NCBI Taxonomy" id="557722"/>
    <lineage>
        <taxon>Bacteria</taxon>
        <taxon>Pseudomonadati</taxon>
        <taxon>Pseudomonadota</taxon>
        <taxon>Gammaproteobacteria</taxon>
        <taxon>Pseudomonadales</taxon>
        <taxon>Pseudomonadaceae</taxon>
        <taxon>Pseudomonas</taxon>
    </lineage>
</organism>
<feature type="chain" id="PRO_1000133740" description="Cobalt-precorrin-5B C(1)-methyltransferase">
    <location>
        <begin position="1"/>
        <end position="366"/>
    </location>
</feature>